<sequence>MPRKGPVAKRDVLPDPMYNSKLVTRLINKMMVDGKKGKSQTILYNAFDIVSERTGKEPMEVFEQALKNIMPVLEVRARRVGGANYQVPVEVRPERRTTLGLRWLVNYARLRGEKTMEERLANEILDAANNAGASVKKREDTHKMAEANKAFAHYRW</sequence>
<accession>B7HQU0</accession>
<organism>
    <name type="scientific">Bacillus cereus (strain AH187)</name>
    <dbReference type="NCBI Taxonomy" id="405534"/>
    <lineage>
        <taxon>Bacteria</taxon>
        <taxon>Bacillati</taxon>
        <taxon>Bacillota</taxon>
        <taxon>Bacilli</taxon>
        <taxon>Bacillales</taxon>
        <taxon>Bacillaceae</taxon>
        <taxon>Bacillus</taxon>
        <taxon>Bacillus cereus group</taxon>
    </lineage>
</organism>
<reference key="1">
    <citation type="submission" date="2008-10" db="EMBL/GenBank/DDBJ databases">
        <title>Genome sequence of Bacillus cereus AH187.</title>
        <authorList>
            <person name="Dodson R.J."/>
            <person name="Durkin A.S."/>
            <person name="Rosovitz M.J."/>
            <person name="Rasko D.A."/>
            <person name="Kolsto A.B."/>
            <person name="Okstad O.A."/>
            <person name="Ravel J."/>
            <person name="Sutton G."/>
        </authorList>
    </citation>
    <scope>NUCLEOTIDE SEQUENCE [LARGE SCALE GENOMIC DNA]</scope>
    <source>
        <strain>AH187</strain>
    </source>
</reference>
<keyword id="KW-0687">Ribonucleoprotein</keyword>
<keyword id="KW-0689">Ribosomal protein</keyword>
<keyword id="KW-0694">RNA-binding</keyword>
<keyword id="KW-0699">rRNA-binding</keyword>
<keyword id="KW-0820">tRNA-binding</keyword>
<feature type="chain" id="PRO_1000125895" description="Small ribosomal subunit protein uS7">
    <location>
        <begin position="1"/>
        <end position="156"/>
    </location>
</feature>
<comment type="function">
    <text evidence="1">One of the primary rRNA binding proteins, it binds directly to 16S rRNA where it nucleates assembly of the head domain of the 30S subunit. Is located at the subunit interface close to the decoding center, probably blocks exit of the E-site tRNA.</text>
</comment>
<comment type="subunit">
    <text evidence="1">Part of the 30S ribosomal subunit. Contacts proteins S9 and S11.</text>
</comment>
<comment type="similarity">
    <text evidence="1">Belongs to the universal ribosomal protein uS7 family.</text>
</comment>
<proteinExistence type="inferred from homology"/>
<name>RS7_BACC7</name>
<evidence type="ECO:0000255" key="1">
    <source>
        <dbReference type="HAMAP-Rule" id="MF_00480"/>
    </source>
</evidence>
<evidence type="ECO:0000305" key="2"/>
<gene>
    <name evidence="1" type="primary">rpsG</name>
    <name type="ordered locus">BCAH187_A0137</name>
</gene>
<dbReference type="EMBL" id="CP001177">
    <property type="protein sequence ID" value="ACJ80402.1"/>
    <property type="molecule type" value="Genomic_DNA"/>
</dbReference>
<dbReference type="SMR" id="B7HQU0"/>
<dbReference type="KEGG" id="bcr:BCAH187_A0137"/>
<dbReference type="HOGENOM" id="CLU_072226_1_1_9"/>
<dbReference type="Proteomes" id="UP000002214">
    <property type="component" value="Chromosome"/>
</dbReference>
<dbReference type="GO" id="GO:0015935">
    <property type="term" value="C:small ribosomal subunit"/>
    <property type="evidence" value="ECO:0007669"/>
    <property type="project" value="InterPro"/>
</dbReference>
<dbReference type="GO" id="GO:0019843">
    <property type="term" value="F:rRNA binding"/>
    <property type="evidence" value="ECO:0007669"/>
    <property type="project" value="UniProtKB-UniRule"/>
</dbReference>
<dbReference type="GO" id="GO:0003735">
    <property type="term" value="F:structural constituent of ribosome"/>
    <property type="evidence" value="ECO:0007669"/>
    <property type="project" value="InterPro"/>
</dbReference>
<dbReference type="GO" id="GO:0000049">
    <property type="term" value="F:tRNA binding"/>
    <property type="evidence" value="ECO:0007669"/>
    <property type="project" value="UniProtKB-UniRule"/>
</dbReference>
<dbReference type="GO" id="GO:0006412">
    <property type="term" value="P:translation"/>
    <property type="evidence" value="ECO:0007669"/>
    <property type="project" value="UniProtKB-UniRule"/>
</dbReference>
<dbReference type="CDD" id="cd14869">
    <property type="entry name" value="uS7_Bacteria"/>
    <property type="match status" value="1"/>
</dbReference>
<dbReference type="FunFam" id="1.10.455.10:FF:000001">
    <property type="entry name" value="30S ribosomal protein S7"/>
    <property type="match status" value="1"/>
</dbReference>
<dbReference type="Gene3D" id="1.10.455.10">
    <property type="entry name" value="Ribosomal protein S7 domain"/>
    <property type="match status" value="1"/>
</dbReference>
<dbReference type="HAMAP" id="MF_00480_B">
    <property type="entry name" value="Ribosomal_uS7_B"/>
    <property type="match status" value="1"/>
</dbReference>
<dbReference type="InterPro" id="IPR000235">
    <property type="entry name" value="Ribosomal_uS7"/>
</dbReference>
<dbReference type="InterPro" id="IPR005717">
    <property type="entry name" value="Ribosomal_uS7_bac/org-type"/>
</dbReference>
<dbReference type="InterPro" id="IPR020606">
    <property type="entry name" value="Ribosomal_uS7_CS"/>
</dbReference>
<dbReference type="InterPro" id="IPR023798">
    <property type="entry name" value="Ribosomal_uS7_dom"/>
</dbReference>
<dbReference type="InterPro" id="IPR036823">
    <property type="entry name" value="Ribosomal_uS7_dom_sf"/>
</dbReference>
<dbReference type="NCBIfam" id="TIGR01029">
    <property type="entry name" value="rpsG_bact"/>
    <property type="match status" value="1"/>
</dbReference>
<dbReference type="PANTHER" id="PTHR11205">
    <property type="entry name" value="RIBOSOMAL PROTEIN S7"/>
    <property type="match status" value="1"/>
</dbReference>
<dbReference type="Pfam" id="PF00177">
    <property type="entry name" value="Ribosomal_S7"/>
    <property type="match status" value="1"/>
</dbReference>
<dbReference type="PIRSF" id="PIRSF002122">
    <property type="entry name" value="RPS7p_RPS7a_RPS5e_RPS7o"/>
    <property type="match status" value="1"/>
</dbReference>
<dbReference type="SUPFAM" id="SSF47973">
    <property type="entry name" value="Ribosomal protein S7"/>
    <property type="match status" value="1"/>
</dbReference>
<dbReference type="PROSITE" id="PS00052">
    <property type="entry name" value="RIBOSOMAL_S7"/>
    <property type="match status" value="1"/>
</dbReference>
<protein>
    <recommendedName>
        <fullName evidence="1">Small ribosomal subunit protein uS7</fullName>
    </recommendedName>
    <alternativeName>
        <fullName evidence="2">30S ribosomal protein S7</fullName>
    </alternativeName>
</protein>